<name>CLPP_SYNWW</name>
<feature type="chain" id="PRO_1000026141" description="ATP-dependent Clp protease proteolytic subunit">
    <location>
        <begin position="1"/>
        <end position="200"/>
    </location>
</feature>
<feature type="active site" description="Nucleophile" evidence="1">
    <location>
        <position position="99"/>
    </location>
</feature>
<feature type="active site" evidence="1">
    <location>
        <position position="124"/>
    </location>
</feature>
<comment type="function">
    <text evidence="1">Cleaves peptides in various proteins in a process that requires ATP hydrolysis. Has a chymotrypsin-like activity. Plays a major role in the degradation of misfolded proteins.</text>
</comment>
<comment type="catalytic activity">
    <reaction evidence="1">
        <text>Hydrolysis of proteins to small peptides in the presence of ATP and magnesium. alpha-casein is the usual test substrate. In the absence of ATP, only oligopeptides shorter than five residues are hydrolyzed (such as succinyl-Leu-Tyr-|-NHMec, and Leu-Tyr-Leu-|-Tyr-Trp, in which cleavage of the -Tyr-|-Leu- and -Tyr-|-Trp bonds also occurs).</text>
        <dbReference type="EC" id="3.4.21.92"/>
    </reaction>
</comment>
<comment type="subunit">
    <text evidence="1">Fourteen ClpP subunits assemble into 2 heptameric rings which stack back to back to give a disk-like structure with a central cavity, resembling the structure of eukaryotic proteasomes.</text>
</comment>
<comment type="subcellular location">
    <subcellularLocation>
        <location evidence="1">Cytoplasm</location>
    </subcellularLocation>
</comment>
<comment type="similarity">
    <text evidence="1">Belongs to the peptidase S14 family.</text>
</comment>
<gene>
    <name evidence="1" type="primary">clpP</name>
    <name type="ordered locus">Swol_1656</name>
</gene>
<sequence>MSYLVPMVVEQTNRGERSYDIYSRLLKDRIIFLGSGIDDTVANLVIAQLLFLEAEDPDKDISLYINSPGGSITAGMAIYDTLQYIRPDVSTICVGLAASMGAFLLAAGKKGKRYALPNAEIMIHQPAGGTQGQATDIEIHARRIMNMKESLNKILAERTGQPLERIQKDTDRDYFMTAQEAKEYGIIDEVISHPKKTSKK</sequence>
<proteinExistence type="inferred from homology"/>
<protein>
    <recommendedName>
        <fullName evidence="1">ATP-dependent Clp protease proteolytic subunit</fullName>
        <ecNumber evidence="1">3.4.21.92</ecNumber>
    </recommendedName>
    <alternativeName>
        <fullName evidence="1">Endopeptidase Clp</fullName>
    </alternativeName>
</protein>
<keyword id="KW-0963">Cytoplasm</keyword>
<keyword id="KW-0378">Hydrolase</keyword>
<keyword id="KW-0645">Protease</keyword>
<keyword id="KW-1185">Reference proteome</keyword>
<keyword id="KW-0720">Serine protease</keyword>
<accession>Q0AWF0</accession>
<evidence type="ECO:0000255" key="1">
    <source>
        <dbReference type="HAMAP-Rule" id="MF_00444"/>
    </source>
</evidence>
<organism>
    <name type="scientific">Syntrophomonas wolfei subsp. wolfei (strain DSM 2245B / Goettingen)</name>
    <dbReference type="NCBI Taxonomy" id="335541"/>
    <lineage>
        <taxon>Bacteria</taxon>
        <taxon>Bacillati</taxon>
        <taxon>Bacillota</taxon>
        <taxon>Clostridia</taxon>
        <taxon>Eubacteriales</taxon>
        <taxon>Syntrophomonadaceae</taxon>
        <taxon>Syntrophomonas</taxon>
    </lineage>
</organism>
<dbReference type="EC" id="3.4.21.92" evidence="1"/>
<dbReference type="EMBL" id="CP000448">
    <property type="protein sequence ID" value="ABI68954.1"/>
    <property type="molecule type" value="Genomic_DNA"/>
</dbReference>
<dbReference type="RefSeq" id="WP_011641052.1">
    <property type="nucleotide sequence ID" value="NC_008346.1"/>
</dbReference>
<dbReference type="SMR" id="Q0AWF0"/>
<dbReference type="STRING" id="335541.Swol_1656"/>
<dbReference type="MEROPS" id="S14.001"/>
<dbReference type="KEGG" id="swo:Swol_1656"/>
<dbReference type="eggNOG" id="COG0740">
    <property type="taxonomic scope" value="Bacteria"/>
</dbReference>
<dbReference type="HOGENOM" id="CLU_058707_3_2_9"/>
<dbReference type="OrthoDB" id="9802800at2"/>
<dbReference type="Proteomes" id="UP000001968">
    <property type="component" value="Chromosome"/>
</dbReference>
<dbReference type="GO" id="GO:0005737">
    <property type="term" value="C:cytoplasm"/>
    <property type="evidence" value="ECO:0007669"/>
    <property type="project" value="UniProtKB-SubCell"/>
</dbReference>
<dbReference type="GO" id="GO:0009368">
    <property type="term" value="C:endopeptidase Clp complex"/>
    <property type="evidence" value="ECO:0007669"/>
    <property type="project" value="TreeGrafter"/>
</dbReference>
<dbReference type="GO" id="GO:0004176">
    <property type="term" value="F:ATP-dependent peptidase activity"/>
    <property type="evidence" value="ECO:0007669"/>
    <property type="project" value="InterPro"/>
</dbReference>
<dbReference type="GO" id="GO:0051117">
    <property type="term" value="F:ATPase binding"/>
    <property type="evidence" value="ECO:0007669"/>
    <property type="project" value="TreeGrafter"/>
</dbReference>
<dbReference type="GO" id="GO:0004252">
    <property type="term" value="F:serine-type endopeptidase activity"/>
    <property type="evidence" value="ECO:0007669"/>
    <property type="project" value="UniProtKB-UniRule"/>
</dbReference>
<dbReference type="GO" id="GO:0006515">
    <property type="term" value="P:protein quality control for misfolded or incompletely synthesized proteins"/>
    <property type="evidence" value="ECO:0007669"/>
    <property type="project" value="TreeGrafter"/>
</dbReference>
<dbReference type="CDD" id="cd07017">
    <property type="entry name" value="S14_ClpP_2"/>
    <property type="match status" value="1"/>
</dbReference>
<dbReference type="FunFam" id="3.90.226.10:FF:000001">
    <property type="entry name" value="ATP-dependent Clp protease proteolytic subunit"/>
    <property type="match status" value="1"/>
</dbReference>
<dbReference type="Gene3D" id="3.90.226.10">
    <property type="entry name" value="2-enoyl-CoA Hydratase, Chain A, domain 1"/>
    <property type="match status" value="1"/>
</dbReference>
<dbReference type="HAMAP" id="MF_00444">
    <property type="entry name" value="ClpP"/>
    <property type="match status" value="1"/>
</dbReference>
<dbReference type="InterPro" id="IPR001907">
    <property type="entry name" value="ClpP"/>
</dbReference>
<dbReference type="InterPro" id="IPR029045">
    <property type="entry name" value="ClpP/crotonase-like_dom_sf"/>
</dbReference>
<dbReference type="InterPro" id="IPR023562">
    <property type="entry name" value="ClpP/TepA"/>
</dbReference>
<dbReference type="InterPro" id="IPR033135">
    <property type="entry name" value="ClpP_His_AS"/>
</dbReference>
<dbReference type="InterPro" id="IPR018215">
    <property type="entry name" value="ClpP_Ser_AS"/>
</dbReference>
<dbReference type="NCBIfam" id="TIGR00493">
    <property type="entry name" value="clpP"/>
    <property type="match status" value="1"/>
</dbReference>
<dbReference type="NCBIfam" id="NF001368">
    <property type="entry name" value="PRK00277.1"/>
    <property type="match status" value="1"/>
</dbReference>
<dbReference type="NCBIfam" id="NF009205">
    <property type="entry name" value="PRK12553.1"/>
    <property type="match status" value="1"/>
</dbReference>
<dbReference type="PANTHER" id="PTHR10381">
    <property type="entry name" value="ATP-DEPENDENT CLP PROTEASE PROTEOLYTIC SUBUNIT"/>
    <property type="match status" value="1"/>
</dbReference>
<dbReference type="PANTHER" id="PTHR10381:SF70">
    <property type="entry name" value="ATP-DEPENDENT CLP PROTEASE PROTEOLYTIC SUBUNIT"/>
    <property type="match status" value="1"/>
</dbReference>
<dbReference type="Pfam" id="PF00574">
    <property type="entry name" value="CLP_protease"/>
    <property type="match status" value="1"/>
</dbReference>
<dbReference type="PRINTS" id="PR00127">
    <property type="entry name" value="CLPPROTEASEP"/>
</dbReference>
<dbReference type="SUPFAM" id="SSF52096">
    <property type="entry name" value="ClpP/crotonase"/>
    <property type="match status" value="1"/>
</dbReference>
<dbReference type="PROSITE" id="PS00382">
    <property type="entry name" value="CLP_PROTEASE_HIS"/>
    <property type="match status" value="1"/>
</dbReference>
<dbReference type="PROSITE" id="PS00381">
    <property type="entry name" value="CLP_PROTEASE_SER"/>
    <property type="match status" value="1"/>
</dbReference>
<reference key="1">
    <citation type="journal article" date="2010" name="Environ. Microbiol.">
        <title>The genome of Syntrophomonas wolfei: new insights into syntrophic metabolism and biohydrogen production.</title>
        <authorList>
            <person name="Sieber J.R."/>
            <person name="Sims D.R."/>
            <person name="Han C."/>
            <person name="Kim E."/>
            <person name="Lykidis A."/>
            <person name="Lapidus A.L."/>
            <person name="McDonnald E."/>
            <person name="Rohlin L."/>
            <person name="Culley D.E."/>
            <person name="Gunsalus R."/>
            <person name="McInerney M.J."/>
        </authorList>
    </citation>
    <scope>NUCLEOTIDE SEQUENCE [LARGE SCALE GENOMIC DNA]</scope>
    <source>
        <strain>DSM 2245B / Goettingen</strain>
    </source>
</reference>